<protein>
    <recommendedName>
        <fullName evidence="1">Protein PsiE homolog</fullName>
    </recommendedName>
</protein>
<comment type="subcellular location">
    <subcellularLocation>
        <location evidence="1">Cell membrane</location>
        <topology evidence="1">Multi-pass membrane protein</topology>
    </subcellularLocation>
</comment>
<comment type="similarity">
    <text evidence="1">Belongs to the PsiE family.</text>
</comment>
<keyword id="KW-1003">Cell membrane</keyword>
<keyword id="KW-0472">Membrane</keyword>
<keyword id="KW-0812">Transmembrane</keyword>
<keyword id="KW-1133">Transmembrane helix</keyword>
<name>PSIE_BACVZ</name>
<sequence length="138" mass="16447">MRFSNNFKKAPYLLQALLNVCLFFLAIALSGLLISETWYIVQFVYKSLFNKVDSYYEMLGELLIFFMYFEFIALIIKYFKSDFHFPLRYFIYIGITAVIRLIIIDHDQAISTFWWAMAILAMICAFFIVNRRNSVVEH</sequence>
<accession>A7Z6Z1</accession>
<proteinExistence type="inferred from homology"/>
<gene>
    <name evidence="1" type="primary">psiE</name>
    <name type="ordered locus">RBAM_024070</name>
</gene>
<evidence type="ECO:0000255" key="1">
    <source>
        <dbReference type="HAMAP-Rule" id="MF_01048"/>
    </source>
</evidence>
<dbReference type="EMBL" id="CP000560">
    <property type="protein sequence ID" value="ABS74767.1"/>
    <property type="molecule type" value="Genomic_DNA"/>
</dbReference>
<dbReference type="RefSeq" id="WP_012118039.1">
    <property type="nucleotide sequence ID" value="NC_009725.2"/>
</dbReference>
<dbReference type="SMR" id="A7Z6Z1"/>
<dbReference type="GeneID" id="93081548"/>
<dbReference type="KEGG" id="bay:RBAM_024070"/>
<dbReference type="HOGENOM" id="CLU_127561_0_0_9"/>
<dbReference type="Proteomes" id="UP000001120">
    <property type="component" value="Chromosome"/>
</dbReference>
<dbReference type="GO" id="GO:0005886">
    <property type="term" value="C:plasma membrane"/>
    <property type="evidence" value="ECO:0007669"/>
    <property type="project" value="UniProtKB-SubCell"/>
</dbReference>
<dbReference type="GO" id="GO:0016036">
    <property type="term" value="P:cellular response to phosphate starvation"/>
    <property type="evidence" value="ECO:0007669"/>
    <property type="project" value="InterPro"/>
</dbReference>
<dbReference type="HAMAP" id="MF_01048">
    <property type="entry name" value="PsiE"/>
    <property type="match status" value="1"/>
</dbReference>
<dbReference type="InterPro" id="IPR009315">
    <property type="entry name" value="P_starv_induced_PsiE"/>
</dbReference>
<dbReference type="InterPro" id="IPR020948">
    <property type="entry name" value="P_starv_induced_PsiE-like"/>
</dbReference>
<dbReference type="NCBIfam" id="NF002765">
    <property type="entry name" value="PRK02833.1-3"/>
    <property type="match status" value="1"/>
</dbReference>
<dbReference type="PANTHER" id="PTHR37819">
    <property type="entry name" value="PROTEIN PSIE"/>
    <property type="match status" value="1"/>
</dbReference>
<dbReference type="PANTHER" id="PTHR37819:SF1">
    <property type="entry name" value="PROTEIN PSIE"/>
    <property type="match status" value="1"/>
</dbReference>
<dbReference type="Pfam" id="PF06146">
    <property type="entry name" value="PsiE"/>
    <property type="match status" value="1"/>
</dbReference>
<dbReference type="PIRSF" id="PIRSF029598">
    <property type="entry name" value="PsiE"/>
    <property type="match status" value="1"/>
</dbReference>
<reference key="1">
    <citation type="journal article" date="2007" name="Nat. Biotechnol.">
        <title>Comparative analysis of the complete genome sequence of the plant growth-promoting bacterium Bacillus amyloliquefaciens FZB42.</title>
        <authorList>
            <person name="Chen X.H."/>
            <person name="Koumoutsi A."/>
            <person name="Scholz R."/>
            <person name="Eisenreich A."/>
            <person name="Schneider K."/>
            <person name="Heinemeyer I."/>
            <person name="Morgenstern B."/>
            <person name="Voss B."/>
            <person name="Hess W.R."/>
            <person name="Reva O."/>
            <person name="Junge H."/>
            <person name="Voigt B."/>
            <person name="Jungblut P.R."/>
            <person name="Vater J."/>
            <person name="Suessmuth R."/>
            <person name="Liesegang H."/>
            <person name="Strittmatter A."/>
            <person name="Gottschalk G."/>
            <person name="Borriss R."/>
        </authorList>
    </citation>
    <scope>NUCLEOTIDE SEQUENCE [LARGE SCALE GENOMIC DNA]</scope>
    <source>
        <strain>DSM 23117 / BGSC 10A6 / LMG 26770 / FZB42</strain>
    </source>
</reference>
<organism>
    <name type="scientific">Bacillus velezensis (strain DSM 23117 / BGSC 10A6 / LMG 26770 / FZB42)</name>
    <name type="common">Bacillus amyloliquefaciens subsp. plantarum</name>
    <dbReference type="NCBI Taxonomy" id="326423"/>
    <lineage>
        <taxon>Bacteria</taxon>
        <taxon>Bacillati</taxon>
        <taxon>Bacillota</taxon>
        <taxon>Bacilli</taxon>
        <taxon>Bacillales</taxon>
        <taxon>Bacillaceae</taxon>
        <taxon>Bacillus</taxon>
        <taxon>Bacillus amyloliquefaciens group</taxon>
    </lineage>
</organism>
<feature type="chain" id="PRO_1000149612" description="Protein PsiE homolog">
    <location>
        <begin position="1"/>
        <end position="138"/>
    </location>
</feature>
<feature type="transmembrane region" description="Helical" evidence="1">
    <location>
        <begin position="14"/>
        <end position="34"/>
    </location>
</feature>
<feature type="transmembrane region" description="Helical" evidence="1">
    <location>
        <begin position="56"/>
        <end position="76"/>
    </location>
</feature>
<feature type="transmembrane region" description="Helical" evidence="1">
    <location>
        <begin position="84"/>
        <end position="104"/>
    </location>
</feature>
<feature type="transmembrane region" description="Helical" evidence="1">
    <location>
        <begin position="109"/>
        <end position="129"/>
    </location>
</feature>